<reference key="1">
    <citation type="journal article" date="2005" name="Proc. Natl. Acad. Sci. U.S.A.">
        <title>Comparison of the complete genome sequences of Pseudomonas syringae pv. syringae B728a and pv. tomato DC3000.</title>
        <authorList>
            <person name="Feil H."/>
            <person name="Feil W.S."/>
            <person name="Chain P."/>
            <person name="Larimer F."/>
            <person name="Dibartolo G."/>
            <person name="Copeland A."/>
            <person name="Lykidis A."/>
            <person name="Trong S."/>
            <person name="Nolan M."/>
            <person name="Goltsman E."/>
            <person name="Thiel J."/>
            <person name="Malfatti S."/>
            <person name="Loper J.E."/>
            <person name="Lapidus A."/>
            <person name="Detter J.C."/>
            <person name="Land M."/>
            <person name="Richardson P.M."/>
            <person name="Kyrpides N.C."/>
            <person name="Ivanova N."/>
            <person name="Lindow S.E."/>
        </authorList>
    </citation>
    <scope>NUCLEOTIDE SEQUENCE [LARGE SCALE GENOMIC DNA]</scope>
    <source>
        <strain>B728a</strain>
    </source>
</reference>
<proteinExistence type="inferred from homology"/>
<feature type="chain" id="PRO_0000223558" description="Ribosomal RNA small subunit methyltransferase H">
    <location>
        <begin position="1"/>
        <end position="313"/>
    </location>
</feature>
<feature type="binding site" evidence="1">
    <location>
        <begin position="35"/>
        <end position="37"/>
    </location>
    <ligand>
        <name>S-adenosyl-L-methionine</name>
        <dbReference type="ChEBI" id="CHEBI:59789"/>
    </ligand>
</feature>
<feature type="binding site" evidence="1">
    <location>
        <position position="55"/>
    </location>
    <ligand>
        <name>S-adenosyl-L-methionine</name>
        <dbReference type="ChEBI" id="CHEBI:59789"/>
    </ligand>
</feature>
<feature type="binding site" evidence="1">
    <location>
        <position position="81"/>
    </location>
    <ligand>
        <name>S-adenosyl-L-methionine</name>
        <dbReference type="ChEBI" id="CHEBI:59789"/>
    </ligand>
</feature>
<feature type="binding site" evidence="1">
    <location>
        <position position="103"/>
    </location>
    <ligand>
        <name>S-adenosyl-L-methionine</name>
        <dbReference type="ChEBI" id="CHEBI:59789"/>
    </ligand>
</feature>
<feature type="binding site" evidence="1">
    <location>
        <position position="110"/>
    </location>
    <ligand>
        <name>S-adenosyl-L-methionine</name>
        <dbReference type="ChEBI" id="CHEBI:59789"/>
    </ligand>
</feature>
<accession>Q4ZNY2</accession>
<keyword id="KW-0963">Cytoplasm</keyword>
<keyword id="KW-0489">Methyltransferase</keyword>
<keyword id="KW-0698">rRNA processing</keyword>
<keyword id="KW-0949">S-adenosyl-L-methionine</keyword>
<keyword id="KW-0808">Transferase</keyword>
<comment type="function">
    <text evidence="1">Specifically methylates the N4 position of cytidine in position 1402 (C1402) of 16S rRNA.</text>
</comment>
<comment type="catalytic activity">
    <reaction evidence="1">
        <text>cytidine(1402) in 16S rRNA + S-adenosyl-L-methionine = N(4)-methylcytidine(1402) in 16S rRNA + S-adenosyl-L-homocysteine + H(+)</text>
        <dbReference type="Rhea" id="RHEA:42928"/>
        <dbReference type="Rhea" id="RHEA-COMP:10286"/>
        <dbReference type="Rhea" id="RHEA-COMP:10287"/>
        <dbReference type="ChEBI" id="CHEBI:15378"/>
        <dbReference type="ChEBI" id="CHEBI:57856"/>
        <dbReference type="ChEBI" id="CHEBI:59789"/>
        <dbReference type="ChEBI" id="CHEBI:74506"/>
        <dbReference type="ChEBI" id="CHEBI:82748"/>
        <dbReference type="EC" id="2.1.1.199"/>
    </reaction>
</comment>
<comment type="subcellular location">
    <subcellularLocation>
        <location evidence="1">Cytoplasm</location>
    </subcellularLocation>
</comment>
<comment type="similarity">
    <text evidence="1">Belongs to the methyltransferase superfamily. RsmH family.</text>
</comment>
<evidence type="ECO:0000255" key="1">
    <source>
        <dbReference type="HAMAP-Rule" id="MF_01007"/>
    </source>
</evidence>
<protein>
    <recommendedName>
        <fullName evidence="1">Ribosomal RNA small subunit methyltransferase H</fullName>
        <ecNumber evidence="1">2.1.1.199</ecNumber>
    </recommendedName>
    <alternativeName>
        <fullName evidence="1">16S rRNA m(4)C1402 methyltransferase</fullName>
    </alternativeName>
    <alternativeName>
        <fullName evidence="1">rRNA (cytosine-N(4)-)-methyltransferase RsmH</fullName>
    </alternativeName>
</protein>
<sequence>MNSGFTHITVLLEEAVEALAVRADGCYLDGTFGRGGHSRLILSQLGPDGRLLGFDKDPQAIATGQALAAEDGRFVIVQRSFAELGSETQERGLAGKVSGILLDLGVSSPQLDDPERGFSFMNDGPLDMRMDPARGISAAEFIATAPAEEIARVFKEYGEERFAKRMANAVVARREVQPFERTADLAEVLKVANPAWEKGKNPATRAFQGLRIHVNNELGDLEAGLEAALDALEVGGRLVVISFHSLEDRIVKLFMRKLAKGEADNMPRNLPIQFKPFEPKIKIHGKAQFASDAETKANPRSRSAVMRVAEKLR</sequence>
<organism>
    <name type="scientific">Pseudomonas syringae pv. syringae (strain B728a)</name>
    <dbReference type="NCBI Taxonomy" id="205918"/>
    <lineage>
        <taxon>Bacteria</taxon>
        <taxon>Pseudomonadati</taxon>
        <taxon>Pseudomonadota</taxon>
        <taxon>Gammaproteobacteria</taxon>
        <taxon>Pseudomonadales</taxon>
        <taxon>Pseudomonadaceae</taxon>
        <taxon>Pseudomonas</taxon>
        <taxon>Pseudomonas syringae</taxon>
    </lineage>
</organism>
<name>RSMH_PSEU2</name>
<gene>
    <name evidence="1" type="primary">rsmH</name>
    <name type="synonym">mraW</name>
    <name type="ordered locus">Psyr_4110</name>
</gene>
<dbReference type="EC" id="2.1.1.199" evidence="1"/>
<dbReference type="EMBL" id="CP000075">
    <property type="protein sequence ID" value="AAY39140.1"/>
    <property type="molecule type" value="Genomic_DNA"/>
</dbReference>
<dbReference type="RefSeq" id="WP_011268849.1">
    <property type="nucleotide sequence ID" value="NC_007005.1"/>
</dbReference>
<dbReference type="RefSeq" id="YP_237178.1">
    <property type="nucleotide sequence ID" value="NC_007005.1"/>
</dbReference>
<dbReference type="SMR" id="Q4ZNY2"/>
<dbReference type="STRING" id="205918.Psyr_4110"/>
<dbReference type="KEGG" id="psb:Psyr_4110"/>
<dbReference type="PATRIC" id="fig|205918.7.peg.4228"/>
<dbReference type="eggNOG" id="COG0275">
    <property type="taxonomic scope" value="Bacteria"/>
</dbReference>
<dbReference type="HOGENOM" id="CLU_038422_2_0_6"/>
<dbReference type="OrthoDB" id="9806637at2"/>
<dbReference type="Proteomes" id="UP000000426">
    <property type="component" value="Chromosome"/>
</dbReference>
<dbReference type="GO" id="GO:0005737">
    <property type="term" value="C:cytoplasm"/>
    <property type="evidence" value="ECO:0007669"/>
    <property type="project" value="UniProtKB-SubCell"/>
</dbReference>
<dbReference type="GO" id="GO:0071424">
    <property type="term" value="F:rRNA (cytosine-N4-)-methyltransferase activity"/>
    <property type="evidence" value="ECO:0007669"/>
    <property type="project" value="UniProtKB-UniRule"/>
</dbReference>
<dbReference type="GO" id="GO:0070475">
    <property type="term" value="P:rRNA base methylation"/>
    <property type="evidence" value="ECO:0007669"/>
    <property type="project" value="UniProtKB-UniRule"/>
</dbReference>
<dbReference type="FunFam" id="1.10.150.170:FF:000001">
    <property type="entry name" value="Ribosomal RNA small subunit methyltransferase H"/>
    <property type="match status" value="1"/>
</dbReference>
<dbReference type="Gene3D" id="1.10.150.170">
    <property type="entry name" value="Putative methyltransferase TM0872, insert domain"/>
    <property type="match status" value="1"/>
</dbReference>
<dbReference type="Gene3D" id="3.40.50.150">
    <property type="entry name" value="Vaccinia Virus protein VP39"/>
    <property type="match status" value="1"/>
</dbReference>
<dbReference type="HAMAP" id="MF_01007">
    <property type="entry name" value="16SrRNA_methyltr_H"/>
    <property type="match status" value="1"/>
</dbReference>
<dbReference type="InterPro" id="IPR002903">
    <property type="entry name" value="RsmH"/>
</dbReference>
<dbReference type="InterPro" id="IPR023397">
    <property type="entry name" value="SAM-dep_MeTrfase_MraW_recog"/>
</dbReference>
<dbReference type="InterPro" id="IPR029063">
    <property type="entry name" value="SAM-dependent_MTases_sf"/>
</dbReference>
<dbReference type="NCBIfam" id="TIGR00006">
    <property type="entry name" value="16S rRNA (cytosine(1402)-N(4))-methyltransferase RsmH"/>
    <property type="match status" value="1"/>
</dbReference>
<dbReference type="PANTHER" id="PTHR11265:SF0">
    <property type="entry name" value="12S RRNA N4-METHYLCYTIDINE METHYLTRANSFERASE"/>
    <property type="match status" value="1"/>
</dbReference>
<dbReference type="PANTHER" id="PTHR11265">
    <property type="entry name" value="S-ADENOSYL-METHYLTRANSFERASE MRAW"/>
    <property type="match status" value="1"/>
</dbReference>
<dbReference type="Pfam" id="PF01795">
    <property type="entry name" value="Methyltransf_5"/>
    <property type="match status" value="1"/>
</dbReference>
<dbReference type="PIRSF" id="PIRSF004486">
    <property type="entry name" value="MraW"/>
    <property type="match status" value="1"/>
</dbReference>
<dbReference type="SUPFAM" id="SSF81799">
    <property type="entry name" value="Putative methyltransferase TM0872, insert domain"/>
    <property type="match status" value="1"/>
</dbReference>
<dbReference type="SUPFAM" id="SSF53335">
    <property type="entry name" value="S-adenosyl-L-methionine-dependent methyltransferases"/>
    <property type="match status" value="1"/>
</dbReference>